<reference key="1">
    <citation type="journal article" date="1992" name="Gene">
        <title>Trans-splicing of an early embryo mRNA in Litomosoides carinii, coding for the major microfilarial sheath protein gp22.</title>
        <authorList>
            <person name="Christ H."/>
            <person name="Hirzmann J."/>
            <person name="Conraths F."/>
            <person name="Zahner H."/>
            <person name="Stirm S."/>
            <person name="Hobom G."/>
        </authorList>
    </citation>
    <scope>NUCLEOTIDE SEQUENCE [GENOMIC DNA]</scope>
</reference>
<reference key="2">
    <citation type="journal article" date="1991" name="Parasitology">
        <title>A major Litomosoides carinii microfilarial sheath glycoprotein (gp22): amino terminal sequence and immunological studies with corresponding synthetic peptides.</title>
        <authorList>
            <person name="Bardehle G."/>
            <person name="Conraths F.J."/>
            <person name="Fahrenholz F."/>
            <person name="Hintz M."/>
            <person name="Linder D."/>
            <person name="Schares G."/>
            <person name="Schott H.-H."/>
            <person name="Schuetzle B."/>
            <person name="Stirm S."/>
            <person name="Stueber W."/>
            <person name="Zahner H."/>
        </authorList>
    </citation>
    <scope>PROTEIN SEQUENCE OF 44-80</scope>
</reference>
<protein>
    <recommendedName>
        <fullName>Major microfilarial sheath protein</fullName>
    </recommendedName>
</protein>
<feature type="signal peptide">
    <location>
        <begin position="1"/>
        <end position="18"/>
    </location>
</feature>
<feature type="propeptide" id="PRO_0000021349" description="Removed in mature form" evidence="2">
    <location>
        <begin position="19"/>
        <end position="43"/>
    </location>
</feature>
<feature type="chain" id="PRO_0000021350" description="Major microfilarial sheath protein">
    <location>
        <begin position="44"/>
        <end position="148"/>
    </location>
</feature>
<feature type="repeat">
    <location>
        <begin position="46"/>
        <end position="50"/>
    </location>
</feature>
<feature type="repeat">
    <location>
        <begin position="54"/>
        <end position="58"/>
    </location>
</feature>
<feature type="repeat">
    <location>
        <begin position="59"/>
        <end position="63"/>
    </location>
</feature>
<feature type="repeat">
    <location>
        <begin position="64"/>
        <end position="68"/>
    </location>
</feature>
<feature type="repeat">
    <location>
        <begin position="71"/>
        <end position="75"/>
    </location>
</feature>
<feature type="region of interest" description="Repeat-rich region">
    <location>
        <begin position="46"/>
        <end position="75"/>
    </location>
</feature>
<feature type="region of interest" description="Disordered" evidence="1">
    <location>
        <begin position="52"/>
        <end position="80"/>
    </location>
</feature>
<feature type="compositionally biased region" description="Pro residues" evidence="1">
    <location>
        <begin position="52"/>
        <end position="73"/>
    </location>
</feature>
<organism>
    <name type="scientific">Litomosoides carinii</name>
    <dbReference type="NCBI Taxonomy" id="6299"/>
    <lineage>
        <taxon>Eukaryota</taxon>
        <taxon>Metazoa</taxon>
        <taxon>Ecdysozoa</taxon>
        <taxon>Nematoda</taxon>
        <taxon>Chromadorea</taxon>
        <taxon>Rhabditida</taxon>
        <taxon>Spirurina</taxon>
        <taxon>Spiruromorpha</taxon>
        <taxon>Filarioidea</taxon>
        <taxon>Onchocercidae</taxon>
        <taxon>Litomosoides</taxon>
    </lineage>
</organism>
<accession>Q01493</accession>
<dbReference type="EMBL" id="M96232">
    <property type="protein sequence ID" value="AAA29278.1"/>
    <property type="molecule type" value="Genomic_DNA"/>
</dbReference>
<dbReference type="PIR" id="JH0788">
    <property type="entry name" value="JH0788"/>
</dbReference>
<keyword id="KW-0903">Direct protein sequencing</keyword>
<keyword id="KW-0325">Glycoprotein</keyword>
<keyword id="KW-0677">Repeat</keyword>
<keyword id="KW-0732">Signal</keyword>
<comment type="developmental stage">
    <text>Is synthesized at high levels at a very early stage of embryonic intrauterine development and becomes a major constituent of the primary egg shell.</text>
</comment>
<comment type="PTM">
    <text evidence="3">O-glycosylated.</text>
</comment>
<comment type="similarity">
    <text evidence="3">To B.pahangi filarial sheath protein.</text>
</comment>
<sequence length="148" mass="16118">MCCKAILSFCILSSLGNALYFGSHRPQYLREVGQRQYPFEPQAFGMLPVPQQPMGPQPMGPQPMEPQPLPMGPQSPQMQVPDRSCSGCVININCGGRECLPTRPTQTQPTQPSWTVETPPTPTPGASQGCRVCACYVPPPCQICQPCQ</sequence>
<name>GP22_LITCA</name>
<evidence type="ECO:0000256" key="1">
    <source>
        <dbReference type="SAM" id="MobiDB-lite"/>
    </source>
</evidence>
<evidence type="ECO:0000269" key="2">
    <source>
    </source>
</evidence>
<evidence type="ECO:0000305" key="3"/>
<gene>
    <name type="primary">GP22</name>
</gene>
<proteinExistence type="evidence at protein level"/>